<organism>
    <name type="scientific">Human cytomegalovirus (strain AD169)</name>
    <name type="common">HHV-5</name>
    <name type="synonym">Human herpesvirus 5</name>
    <dbReference type="NCBI Taxonomy" id="10360"/>
    <lineage>
        <taxon>Viruses</taxon>
        <taxon>Duplodnaviria</taxon>
        <taxon>Heunggongvirae</taxon>
        <taxon>Peploviricota</taxon>
        <taxon>Herviviricetes</taxon>
        <taxon>Herpesvirales</taxon>
        <taxon>Orthoherpesviridae</taxon>
        <taxon>Betaherpesvirinae</taxon>
        <taxon>Cytomegalovirus</taxon>
        <taxon>Cytomegalovirus humanbeta5</taxon>
        <taxon>Human cytomegalovirus</taxon>
    </lineage>
</organism>
<proteinExistence type="evidence at protein level"/>
<name>CEP2_HCMVA</name>
<dbReference type="EMBL" id="X17403">
    <property type="protein sequence ID" value="CAA35368.1"/>
    <property type="molecule type" value="Genomic_DNA"/>
</dbReference>
<dbReference type="EMBL" id="BK000394">
    <property type="protein sequence ID" value="DAA00191.1"/>
    <property type="molecule type" value="Genomic_DNA"/>
</dbReference>
<dbReference type="PIR" id="S09858">
    <property type="entry name" value="S09858"/>
</dbReference>
<dbReference type="Proteomes" id="UP000008991">
    <property type="component" value="Segment"/>
</dbReference>
<dbReference type="Proteomes" id="UP000008992">
    <property type="component" value="Segment"/>
</dbReference>
<dbReference type="GO" id="GO:0030430">
    <property type="term" value="C:host cell cytoplasm"/>
    <property type="evidence" value="ECO:0007669"/>
    <property type="project" value="UniProtKB-SubCell"/>
</dbReference>
<dbReference type="GO" id="GO:0042025">
    <property type="term" value="C:host cell nucleus"/>
    <property type="evidence" value="ECO:0007669"/>
    <property type="project" value="UniProtKB-SubCell"/>
</dbReference>
<dbReference type="GO" id="GO:0019033">
    <property type="term" value="C:viral tegument"/>
    <property type="evidence" value="ECO:0007669"/>
    <property type="project" value="UniProtKB-SubCell"/>
</dbReference>
<dbReference type="GO" id="GO:0052170">
    <property type="term" value="P:symbiont-mediated suppression of host innate immune response"/>
    <property type="evidence" value="ECO:0007669"/>
    <property type="project" value="UniProtKB-KW"/>
</dbReference>
<dbReference type="HAMAP" id="MF_04039">
    <property type="entry name" value="HSV_CEP2"/>
    <property type="match status" value="1"/>
</dbReference>
<dbReference type="InterPro" id="IPR004286">
    <property type="entry name" value="Herpes_UL16/UL94"/>
</dbReference>
<dbReference type="Pfam" id="PF03044">
    <property type="entry name" value="Herpes_UL16"/>
    <property type="match status" value="1"/>
</dbReference>
<reference key="1">
    <citation type="journal article" date="1990" name="Curr. Top. Microbiol. Immunol.">
        <title>Analysis of the protein-coding content of the sequence of human cytomegalovirus strain AD169.</title>
        <authorList>
            <person name="Chee M.S."/>
            <person name="Bankier A.T."/>
            <person name="Beck S."/>
            <person name="Bohni R."/>
            <person name="Brown C.M."/>
            <person name="Cerny R."/>
            <person name="Horsnell T."/>
            <person name="Hutchison C.A. III"/>
            <person name="Kouzarides T."/>
            <person name="Martignetti J.A."/>
            <person name="Preddie E."/>
            <person name="Satchwell S.C."/>
            <person name="Tomlinson P."/>
            <person name="Weston K.M."/>
            <person name="Barrell B.G."/>
        </authorList>
    </citation>
    <scope>NUCLEOTIDE SEQUENCE [LARGE SCALE GENOMIC DNA]</scope>
</reference>
<reference key="2">
    <citation type="journal article" date="2003" name="J. Gen. Virol.">
        <title>The human cytomegalovirus genome revisited: comparison with the chimpanzee cytomegalovirus genome.</title>
        <authorList>
            <person name="Davison A.J."/>
            <person name="Dolan A."/>
            <person name="Akter P."/>
            <person name="Addison C."/>
            <person name="Dargan D.J."/>
            <person name="Alcendor D.J."/>
            <person name="McGeoch D.J."/>
            <person name="Hayward G.S."/>
        </authorList>
    </citation>
    <scope>GENOME REANNOTATION</scope>
</reference>
<reference key="3">
    <citation type="journal article" date="2003" name="J. Gen. Virol.">
        <authorList>
            <person name="Davison A.J."/>
            <person name="Dolan A."/>
            <person name="Akter P."/>
            <person name="Addison C."/>
            <person name="Dargan D.J."/>
            <person name="Alcendor D.J."/>
            <person name="McGeoch D.J."/>
            <person name="Hayward G.S."/>
        </authorList>
    </citation>
    <scope>ERRATUM OF PUBMED:12533697</scope>
</reference>
<reference key="4">
    <citation type="journal article" date="1996" name="J. Virol.">
        <title>The human cytomegalovirus UL94 open reading frame encodes a conserved herpesvirus capsid/tegument-associated virion protein that is expressed with true late kinetics.</title>
        <authorList>
            <person name="Wing B.A."/>
            <person name="Lee G.C."/>
            <person name="Huang E.S."/>
        </authorList>
    </citation>
    <scope>FUNCTION</scope>
</reference>
<reference key="5">
    <citation type="journal article" date="2004" name="J. Virol.">
        <title>Identification of proteins in human cytomegalovirus (HCMV) particles: the HCMV proteome.</title>
        <authorList>
            <person name="Varnum S.M."/>
            <person name="Streblow D.N."/>
            <person name="Monroe M.E."/>
            <person name="Smith P."/>
            <person name="Auberry K.J."/>
            <person name="Pasa-Tolic L."/>
            <person name="Wang D."/>
            <person name="Camp D.G. II"/>
            <person name="Rodland K."/>
            <person name="Wiley S."/>
            <person name="Britt W."/>
            <person name="Shenk T."/>
            <person name="Smith R.D."/>
            <person name="Nelson J.A."/>
        </authorList>
    </citation>
    <scope>IDENTIFICATION</scope>
</reference>
<reference key="6">
    <citation type="journal article" date="2004" name="J. Virol.">
        <authorList>
            <person name="Varnum S.M."/>
            <person name="Streblow D.N."/>
            <person name="Monroe M.E."/>
            <person name="Smith P."/>
            <person name="Auberry K.J."/>
            <person name="Pasa-Tolic L."/>
            <person name="Wang D."/>
            <person name="Camp D.G. II"/>
            <person name="Rodland K."/>
            <person name="Wiley S."/>
            <person name="Britt W."/>
            <person name="Shenk T."/>
            <person name="Smith R.D."/>
            <person name="Nelson J.A."/>
        </authorList>
    </citation>
    <scope>ERRATUM OF PUBMED:15452216</scope>
</reference>
<reference key="7">
    <citation type="journal article" date="2009" name="Virology">
        <title>The tegument protein UL94 of human cytomegalovirus as a binding partner for tegument protein pp28 identified by intracellular imaging.</title>
        <authorList>
            <person name="Liu Y."/>
            <person name="Cui Z."/>
            <person name="Zhang Z."/>
            <person name="Wei H."/>
            <person name="Zhou Y."/>
            <person name="Wang M."/>
            <person name="Zhang X.E."/>
        </authorList>
    </citation>
    <scope>FUNCTION</scope>
    <scope>INTERACTION WITH UL99</scope>
    <scope>SUBCELLULAR LOCATION</scope>
    <scope>DISRUPTION PHENOTYPE</scope>
</reference>
<reference key="8">
    <citation type="journal article" date="2012" name="J. Virol.">
        <title>The human cytomegalovirus (HCMV) tegument protein UL94 is essential for secondary envelopment of HCMV virions.</title>
        <authorList>
            <person name="Phillips S.L."/>
            <person name="Bresnahan W.A."/>
        </authorList>
    </citation>
    <scope>FUNCTION</scope>
    <scope>SUBCELLULAR LOCATION</scope>
</reference>
<reference key="9">
    <citation type="journal article" date="2012" name="J. Virol.">
        <title>Interaction between the human cytomegalovirus tegument proteins UL94 and UL99 is essential for virus replication.</title>
        <authorList>
            <person name="Phillips S.L."/>
            <person name="Cygnar D."/>
            <person name="Thomas A."/>
            <person name="Bresnahan W.A."/>
        </authorList>
    </citation>
    <scope>INTERACTION WITH CYTOPLASMIC ENVELOPMENT PROTEIN 3</scope>
    <scope>FUNCTION</scope>
</reference>
<reference key="10">
    <citation type="journal article" date="2012" name="Virus Res.">
        <title>Human cytomegalovirus UL94 is a nucleocytoplasmic shuttling protein containing two NLSs and one NES.</title>
        <authorList>
            <person name="Liu Y."/>
            <person name="Zhang Z."/>
            <person name="Zhao X."/>
            <person name="Wei H."/>
            <person name="Deng J."/>
            <person name="Cui Z."/>
            <person name="Zhang X.E."/>
        </authorList>
    </citation>
    <scope>SUBCELLULAR LOCATION</scope>
    <scope>MUTAGENESIS OF LEU-61; LEU-63 AND LEU-343</scope>
</reference>
<reference key="11">
    <citation type="journal article" date="2014" name="J. Virol.">
        <title>Identification of human cytomegalovirus genes important for biogenesis of the cytoplasmic virion assembly complex.</title>
        <authorList>
            <person name="Das S."/>
            <person name="Ortiz D.A."/>
            <person name="Gurczynski S.J."/>
            <person name="Khan F."/>
            <person name="Pellett P.E."/>
        </authorList>
    </citation>
    <scope>FUNCTION</scope>
</reference>
<reference key="12">
    <citation type="journal article" date="2020" name="J. Virol.">
        <title>Human Cytomegalovirus Protein UL94 Targets MITA to Evade the Antiviral Immune Response.</title>
        <authorList>
            <person name="Zou H.M."/>
            <person name="Huang Z.F."/>
            <person name="Yang Y."/>
            <person name="Luo W.W."/>
            <person name="Wang S.Y."/>
            <person name="Luo M.H."/>
            <person name="Fu Y.Z."/>
            <person name="Wang Y.Y."/>
        </authorList>
    </citation>
    <scope>FUNCTION</scope>
    <scope>INTERACTION WITH HOST STING1</scope>
</reference>
<comment type="function">
    <text evidence="1 2 3 5 6 7 8">Plays a critical role in cytoplasmic virus egress. Participates in the final step of tegumentation and envelope acquisition within the host cytoplasm by directly interacting with the capsid. Upon virion binding to target cell, a signaling cascade is triggered to disrupt the interaction with the capsid, thereby preparing capsid uncoating (By similarity). Additionally, antagonizes the viral DNA-triggered antiviral immune response by targeting host STING1 and preventing its dimerization and trafficking (PubMed:32238587).</text>
</comment>
<comment type="subunit">
    <text evidence="1 2 5 7">Interacts with cytoplasmic envelopment protein 3 and with the capsid (By similarity). Interacts with host STING1; this interaction prevents viral DNA-triggered antiviral immune response (PubMed:32238587).</text>
</comment>
<comment type="subcellular location">
    <subcellularLocation>
        <location evidence="1 2">Virion tegument</location>
    </subcellularLocation>
    <subcellularLocation>
        <location evidence="1 4">Host cytoplasm</location>
    </subcellularLocation>
    <subcellularLocation>
        <location evidence="1 4">Host nucleus</location>
    </subcellularLocation>
    <text evidence="1 4">Localizes in the host nucleus up to 18 hours postinfection, but at later times localizes to punctate, cytoplasmic structures.</text>
</comment>
<comment type="disruption phenotype">
    <text evidence="7">UL94 deficiency mediates HCMV-induced transcription of type I IFNs and downstream antiviral effectors leading to impaired viral replication.</text>
</comment>
<comment type="similarity">
    <text evidence="1">Belongs to the herpesviridae cytoplasmic envelopment protein 2 family.</text>
</comment>
<sequence>MAWRSGLCETDSRTLKQFLQEECMWKLVGKSRKHREYRAVACRSTIFSPEDDSSCILCQLLLLYRDGEWIICFCCNGRYQGHYGVNHVHRRRRRICHLPTLYQLSFGGPLGPASIDFLPSFSQVTSSMTCDGITPDVIYEVCMLVPQDEAKRILVKGHGAMDLTCQKAVTLGGAGAWLLPRPEGYTLFFYILCYDLFTSCGNRCDIPSMTRLMAAATACGQAGCSFCTDHEGHVDPTGNYVGCTPDMGRCLCYVPCGPMTQSLIHNEEPATFFCESDDAKYLCAVGSKTAAQVTLGDGLDYHIGVKDSEGRWLPVKTDVWDLVKVEEPVSRMIVCSCPVLKNLVH</sequence>
<feature type="chain" id="PRO_0000115957" description="Cytoplasmic envelopment protein 2">
    <location>
        <begin position="1"/>
        <end position="345"/>
    </location>
</feature>
<feature type="region of interest" description="Nuclear localization signal 1" evidence="4">
    <location>
        <begin position="26"/>
        <end position="35"/>
    </location>
</feature>
<feature type="region of interest" description="Nuclear export signal" evidence="4">
    <location>
        <begin position="55"/>
        <end position="63"/>
    </location>
</feature>
<feature type="region of interest" description="Nuclear localization signal 2" evidence="4">
    <location>
        <begin position="90"/>
        <end position="94"/>
    </location>
</feature>
<feature type="mutagenesis site" description="Almost complete loss of cytoplasmic localization." evidence="4">
    <original>L</original>
    <variation>A</variation>
    <location>
        <position position="61"/>
    </location>
</feature>
<feature type="mutagenesis site" description="Almost complete of cytoplasmic localization." evidence="4">
    <original>L</original>
    <variation>A</variation>
    <location>
        <position position="63"/>
    </location>
</feature>
<feature type="mutagenesis site" description="Complete loss of nuclear localization." evidence="4">
    <original>L</original>
    <variation>A</variation>
    <location>
        <position position="343"/>
    </location>
</feature>
<organismHost>
    <name type="scientific">Homo sapiens</name>
    <name type="common">Human</name>
    <dbReference type="NCBI Taxonomy" id="9606"/>
</organismHost>
<protein>
    <recommendedName>
        <fullName evidence="1">Cytoplasmic envelopment protein 2</fullName>
    </recommendedName>
</protein>
<keyword id="KW-1035">Host cytoplasm</keyword>
<keyword id="KW-1048">Host nucleus</keyword>
<keyword id="KW-0945">Host-virus interaction</keyword>
<keyword id="KW-1090">Inhibition of host innate immune response by virus</keyword>
<keyword id="KW-0426">Late protein</keyword>
<keyword id="KW-1185">Reference proteome</keyword>
<keyword id="KW-0899">Viral immunoevasion</keyword>
<keyword id="KW-0946">Virion</keyword>
<keyword id="KW-0920">Virion tegument</keyword>
<accession>P16800</accession>
<accession>Q7M6J7</accession>
<evidence type="ECO:0000255" key="1">
    <source>
        <dbReference type="HAMAP-Rule" id="MF_04039"/>
    </source>
</evidence>
<evidence type="ECO:0000269" key="2">
    <source>
    </source>
</evidence>
<evidence type="ECO:0000269" key="3">
    <source>
    </source>
</evidence>
<evidence type="ECO:0000269" key="4">
    <source>
    </source>
</evidence>
<evidence type="ECO:0000269" key="5">
    <source>
    </source>
</evidence>
<evidence type="ECO:0000269" key="6">
    <source>
    </source>
</evidence>
<evidence type="ECO:0000269" key="7">
    <source>
    </source>
</evidence>
<evidence type="ECO:0000269" key="8">
    <source>
    </source>
</evidence>
<gene>
    <name type="primary">UL94</name>
</gene>